<reference key="1">
    <citation type="journal article" date="1999" name="Nature">
        <title>Sequence and analysis of chromosome 4 of the plant Arabidopsis thaliana.</title>
        <authorList>
            <person name="Mayer K.F.X."/>
            <person name="Schueller C."/>
            <person name="Wambutt R."/>
            <person name="Murphy G."/>
            <person name="Volckaert G."/>
            <person name="Pohl T."/>
            <person name="Duesterhoeft A."/>
            <person name="Stiekema W."/>
            <person name="Entian K.-D."/>
            <person name="Terryn N."/>
            <person name="Harris B."/>
            <person name="Ansorge W."/>
            <person name="Brandt P."/>
            <person name="Grivell L.A."/>
            <person name="Rieger M."/>
            <person name="Weichselgartner M."/>
            <person name="de Simone V."/>
            <person name="Obermaier B."/>
            <person name="Mache R."/>
            <person name="Mueller M."/>
            <person name="Kreis M."/>
            <person name="Delseny M."/>
            <person name="Puigdomenech P."/>
            <person name="Watson M."/>
            <person name="Schmidtheini T."/>
            <person name="Reichert B."/>
            <person name="Portetelle D."/>
            <person name="Perez-Alonso M."/>
            <person name="Boutry M."/>
            <person name="Bancroft I."/>
            <person name="Vos P."/>
            <person name="Hoheisel J."/>
            <person name="Zimmermann W."/>
            <person name="Wedler H."/>
            <person name="Ridley P."/>
            <person name="Langham S.-A."/>
            <person name="McCullagh B."/>
            <person name="Bilham L."/>
            <person name="Robben J."/>
            <person name="van der Schueren J."/>
            <person name="Grymonprez B."/>
            <person name="Chuang Y.-J."/>
            <person name="Vandenbussche F."/>
            <person name="Braeken M."/>
            <person name="Weltjens I."/>
            <person name="Voet M."/>
            <person name="Bastiaens I."/>
            <person name="Aert R."/>
            <person name="Defoor E."/>
            <person name="Weitzenegger T."/>
            <person name="Bothe G."/>
            <person name="Ramsperger U."/>
            <person name="Hilbert H."/>
            <person name="Braun M."/>
            <person name="Holzer E."/>
            <person name="Brandt A."/>
            <person name="Peters S."/>
            <person name="van Staveren M."/>
            <person name="Dirkse W."/>
            <person name="Mooijman P."/>
            <person name="Klein Lankhorst R."/>
            <person name="Rose M."/>
            <person name="Hauf J."/>
            <person name="Koetter P."/>
            <person name="Berneiser S."/>
            <person name="Hempel S."/>
            <person name="Feldpausch M."/>
            <person name="Lamberth S."/>
            <person name="Van den Daele H."/>
            <person name="De Keyser A."/>
            <person name="Buysshaert C."/>
            <person name="Gielen J."/>
            <person name="Villarroel R."/>
            <person name="De Clercq R."/>
            <person name="van Montagu M."/>
            <person name="Rogers J."/>
            <person name="Cronin A."/>
            <person name="Quail M.A."/>
            <person name="Bray-Allen S."/>
            <person name="Clark L."/>
            <person name="Doggett J."/>
            <person name="Hall S."/>
            <person name="Kay M."/>
            <person name="Lennard N."/>
            <person name="McLay K."/>
            <person name="Mayes R."/>
            <person name="Pettett A."/>
            <person name="Rajandream M.A."/>
            <person name="Lyne M."/>
            <person name="Benes V."/>
            <person name="Rechmann S."/>
            <person name="Borkova D."/>
            <person name="Bloecker H."/>
            <person name="Scharfe M."/>
            <person name="Grimm M."/>
            <person name="Loehnert T.-H."/>
            <person name="Dose S."/>
            <person name="de Haan M."/>
            <person name="Maarse A.C."/>
            <person name="Schaefer M."/>
            <person name="Mueller-Auer S."/>
            <person name="Gabel C."/>
            <person name="Fuchs M."/>
            <person name="Fartmann B."/>
            <person name="Granderath K."/>
            <person name="Dauner D."/>
            <person name="Herzl A."/>
            <person name="Neumann S."/>
            <person name="Argiriou A."/>
            <person name="Vitale D."/>
            <person name="Liguori R."/>
            <person name="Piravandi E."/>
            <person name="Massenet O."/>
            <person name="Quigley F."/>
            <person name="Clabauld G."/>
            <person name="Muendlein A."/>
            <person name="Felber R."/>
            <person name="Schnabl S."/>
            <person name="Hiller R."/>
            <person name="Schmidt W."/>
            <person name="Lecharny A."/>
            <person name="Aubourg S."/>
            <person name="Chefdor F."/>
            <person name="Cooke R."/>
            <person name="Berger C."/>
            <person name="Monfort A."/>
            <person name="Casacuberta E."/>
            <person name="Gibbons T."/>
            <person name="Weber N."/>
            <person name="Vandenbol M."/>
            <person name="Bargues M."/>
            <person name="Terol J."/>
            <person name="Torres A."/>
            <person name="Perez-Perez A."/>
            <person name="Purnelle B."/>
            <person name="Bent E."/>
            <person name="Johnson S."/>
            <person name="Tacon D."/>
            <person name="Jesse T."/>
            <person name="Heijnen L."/>
            <person name="Schwarz S."/>
            <person name="Scholler P."/>
            <person name="Heber S."/>
            <person name="Francs P."/>
            <person name="Bielke C."/>
            <person name="Frishman D."/>
            <person name="Haase D."/>
            <person name="Lemcke K."/>
            <person name="Mewes H.-W."/>
            <person name="Stocker S."/>
            <person name="Zaccaria P."/>
            <person name="Bevan M."/>
            <person name="Wilson R.K."/>
            <person name="de la Bastide M."/>
            <person name="Habermann K."/>
            <person name="Parnell L."/>
            <person name="Dedhia N."/>
            <person name="Gnoj L."/>
            <person name="Schutz K."/>
            <person name="Huang E."/>
            <person name="Spiegel L."/>
            <person name="Sekhon M."/>
            <person name="Murray J."/>
            <person name="Sheet P."/>
            <person name="Cordes M."/>
            <person name="Abu-Threideh J."/>
            <person name="Stoneking T."/>
            <person name="Kalicki J."/>
            <person name="Graves T."/>
            <person name="Harmon G."/>
            <person name="Edwards J."/>
            <person name="Latreille P."/>
            <person name="Courtney L."/>
            <person name="Cloud J."/>
            <person name="Abbott A."/>
            <person name="Scott K."/>
            <person name="Johnson D."/>
            <person name="Minx P."/>
            <person name="Bentley D."/>
            <person name="Fulton B."/>
            <person name="Miller N."/>
            <person name="Greco T."/>
            <person name="Kemp K."/>
            <person name="Kramer J."/>
            <person name="Fulton L."/>
            <person name="Mardis E."/>
            <person name="Dante M."/>
            <person name="Pepin K."/>
            <person name="Hillier L.W."/>
            <person name="Nelson J."/>
            <person name="Spieth J."/>
            <person name="Ryan E."/>
            <person name="Andrews S."/>
            <person name="Geisel C."/>
            <person name="Layman D."/>
            <person name="Du H."/>
            <person name="Ali J."/>
            <person name="Berghoff A."/>
            <person name="Jones K."/>
            <person name="Drone K."/>
            <person name="Cotton M."/>
            <person name="Joshu C."/>
            <person name="Antonoiu B."/>
            <person name="Zidanic M."/>
            <person name="Strong C."/>
            <person name="Sun H."/>
            <person name="Lamar B."/>
            <person name="Yordan C."/>
            <person name="Ma P."/>
            <person name="Zhong J."/>
            <person name="Preston R."/>
            <person name="Vil D."/>
            <person name="Shekher M."/>
            <person name="Matero A."/>
            <person name="Shah R."/>
            <person name="Swaby I.K."/>
            <person name="O'Shaughnessy A."/>
            <person name="Rodriguez M."/>
            <person name="Hoffman J."/>
            <person name="Till S."/>
            <person name="Granat S."/>
            <person name="Shohdy N."/>
            <person name="Hasegawa A."/>
            <person name="Hameed A."/>
            <person name="Lodhi M."/>
            <person name="Johnson A."/>
            <person name="Chen E."/>
            <person name="Marra M.A."/>
            <person name="Martienssen R."/>
            <person name="McCombie W.R."/>
        </authorList>
    </citation>
    <scope>NUCLEOTIDE SEQUENCE [LARGE SCALE GENOMIC DNA]</scope>
    <source>
        <strain>cv. Columbia</strain>
    </source>
</reference>
<reference key="2">
    <citation type="journal article" date="2017" name="Plant J.">
        <title>Araport11: a complete reannotation of the Arabidopsis thaliana reference genome.</title>
        <authorList>
            <person name="Cheng C.Y."/>
            <person name="Krishnakumar V."/>
            <person name="Chan A.P."/>
            <person name="Thibaud-Nissen F."/>
            <person name="Schobel S."/>
            <person name="Town C.D."/>
        </authorList>
    </citation>
    <scope>GENOME REANNOTATION</scope>
    <source>
        <strain>cv. Columbia</strain>
    </source>
</reference>
<reference key="3">
    <citation type="journal article" date="2003" name="Science">
        <title>Empirical analysis of transcriptional activity in the Arabidopsis genome.</title>
        <authorList>
            <person name="Yamada K."/>
            <person name="Lim J."/>
            <person name="Dale J.M."/>
            <person name="Chen H."/>
            <person name="Shinn P."/>
            <person name="Palm C.J."/>
            <person name="Southwick A.M."/>
            <person name="Wu H.C."/>
            <person name="Kim C.J."/>
            <person name="Nguyen M."/>
            <person name="Pham P.K."/>
            <person name="Cheuk R.F."/>
            <person name="Karlin-Newmann G."/>
            <person name="Liu S.X."/>
            <person name="Lam B."/>
            <person name="Sakano H."/>
            <person name="Wu T."/>
            <person name="Yu G."/>
            <person name="Miranda M."/>
            <person name="Quach H.L."/>
            <person name="Tripp M."/>
            <person name="Chang C.H."/>
            <person name="Lee J.M."/>
            <person name="Toriumi M.J."/>
            <person name="Chan M.M."/>
            <person name="Tang C.C."/>
            <person name="Onodera C.S."/>
            <person name="Deng J.M."/>
            <person name="Akiyama K."/>
            <person name="Ansari Y."/>
            <person name="Arakawa T."/>
            <person name="Banh J."/>
            <person name="Banno F."/>
            <person name="Bowser L."/>
            <person name="Brooks S.Y."/>
            <person name="Carninci P."/>
            <person name="Chao Q."/>
            <person name="Choy N."/>
            <person name="Enju A."/>
            <person name="Goldsmith A.D."/>
            <person name="Gurjal M."/>
            <person name="Hansen N.F."/>
            <person name="Hayashizaki Y."/>
            <person name="Johnson-Hopson C."/>
            <person name="Hsuan V.W."/>
            <person name="Iida K."/>
            <person name="Karnes M."/>
            <person name="Khan S."/>
            <person name="Koesema E."/>
            <person name="Ishida J."/>
            <person name="Jiang P.X."/>
            <person name="Jones T."/>
            <person name="Kawai J."/>
            <person name="Kamiya A."/>
            <person name="Meyers C."/>
            <person name="Nakajima M."/>
            <person name="Narusaka M."/>
            <person name="Seki M."/>
            <person name="Sakurai T."/>
            <person name="Satou M."/>
            <person name="Tamse R."/>
            <person name="Vaysberg M."/>
            <person name="Wallender E.K."/>
            <person name="Wong C."/>
            <person name="Yamamura Y."/>
            <person name="Yuan S."/>
            <person name="Shinozaki K."/>
            <person name="Davis R.W."/>
            <person name="Theologis A."/>
            <person name="Ecker J.R."/>
        </authorList>
    </citation>
    <scope>NUCLEOTIDE SEQUENCE [LARGE SCALE MRNA]</scope>
    <source>
        <strain>cv. Columbia</strain>
    </source>
</reference>
<reference key="4">
    <citation type="submission" date="2002-03" db="EMBL/GenBank/DDBJ databases">
        <title>Full-length cDNA from Arabidopsis thaliana.</title>
        <authorList>
            <person name="Brover V.V."/>
            <person name="Troukhan M.E."/>
            <person name="Alexandrov N.A."/>
            <person name="Lu Y.-P."/>
            <person name="Flavell R.B."/>
            <person name="Feldmann K.A."/>
        </authorList>
    </citation>
    <scope>NUCLEOTIDE SEQUENCE [LARGE SCALE MRNA]</scope>
</reference>
<reference key="5">
    <citation type="journal article" date="2004" name="Trends Plant Sci.">
        <title>The growing family of mitochondrial carriers in Arabidopsis.</title>
        <authorList>
            <person name="Picault N."/>
            <person name="Hodges M."/>
            <person name="Palmieri L."/>
            <person name="Palmieri F."/>
        </authorList>
    </citation>
    <scope>GENE FAMILY</scope>
</reference>
<reference key="6">
    <citation type="journal article" date="2007" name="Plant Mol. Biol.">
        <title>Isolation and characterization of shs1, a sugar-hypersensitive and ABA-insensitive mutant with multiple stress responses.</title>
        <authorList>
            <person name="Inan G."/>
            <person name="Goto F."/>
            <person name="Jin J.B."/>
            <person name="Rosado A."/>
            <person name="Koiwa H."/>
            <person name="Shi H."/>
            <person name="Hasegawa P.M."/>
            <person name="Bressan R.A."/>
            <person name="Maggio A."/>
            <person name="Li X."/>
        </authorList>
    </citation>
    <scope>FUNCTION</scope>
</reference>
<reference key="7">
    <citation type="journal article" date="2008" name="Plant J.">
        <title>Characterization of the Arabidopsis Brittle1 transport protein and impact of reduced activity on plant metabolism.</title>
        <authorList>
            <person name="Kirchberger S."/>
            <person name="Tjaden J."/>
            <person name="Neuhaus H.E."/>
        </authorList>
    </citation>
    <scope>FUNCTION</scope>
    <scope>ACTIVITY REGULATION</scope>
    <scope>BIOPHYSICOCHEMICAL PROPERTIES</scope>
    <scope>SUBCELLULAR LOCATION</scope>
    <scope>TISSUE SPECIFICITY</scope>
    <scope>DISRUPTION PHENOTYPE</scope>
</reference>
<reference key="8">
    <citation type="journal article" date="2011" name="Plant Cell Physiol.">
        <title>Dual targeting to mitochondria and plastids of AtBT1 and ZmBT1, two members of the mitochondrial carrier family.</title>
        <authorList>
            <person name="Bahaji A."/>
            <person name="Ovecka M."/>
            <person name="Barany I."/>
            <person name="Risueno M.C."/>
            <person name="Munoz F.J."/>
            <person name="Baroja-Fernandez E."/>
            <person name="Montero M."/>
            <person name="Li J."/>
            <person name="Hidalgo M."/>
            <person name="Sesma M.T."/>
            <person name="Ezquer I."/>
            <person name="Testillano P.S."/>
            <person name="Pozueta-Romero J."/>
        </authorList>
    </citation>
    <scope>SUBCELLULAR LOCATION</scope>
</reference>
<reference key="9">
    <citation type="journal article" date="2011" name="Plant J.">
        <title>Specific delivery of AtBT1 to mitochondria complements the aberrant growth and sterility phenotype of homozygous Atbt1 Arabidopsis mutants.</title>
        <authorList>
            <person name="Bahaji A."/>
            <person name="Munoz F.J."/>
            <person name="Ovecka M."/>
            <person name="Baroja-Fernandez E."/>
            <person name="Montero M."/>
            <person name="Li J."/>
            <person name="Hidalgo M."/>
            <person name="Almagro G."/>
            <person name="Sesma M.T."/>
            <person name="Ezquer I."/>
            <person name="Pozueta-Romero J."/>
        </authorList>
    </citation>
    <scope>FUNCTION</scope>
    <scope>SUBCELLULAR LOCATION</scope>
</reference>
<proteinExistence type="evidence at protein level"/>
<keyword id="KW-0150">Chloroplast</keyword>
<keyword id="KW-0472">Membrane</keyword>
<keyword id="KW-0496">Mitochondrion</keyword>
<keyword id="KW-0999">Mitochondrion inner membrane</keyword>
<keyword id="KW-0934">Plastid</keyword>
<keyword id="KW-1001">Plastid inner membrane</keyword>
<keyword id="KW-1185">Reference proteome</keyword>
<keyword id="KW-0677">Repeat</keyword>
<keyword id="KW-0346">Stress response</keyword>
<keyword id="KW-0809">Transit peptide</keyword>
<keyword id="KW-0812">Transmembrane</keyword>
<keyword id="KW-1133">Transmembrane helix</keyword>
<keyword id="KW-0813">Transport</keyword>
<accession>Q9SUV1</accession>
<protein>
    <recommendedName>
        <fullName>Adenine nucleotide transporter BT1, chloroplastic/mitochondrial</fullName>
    </recommendedName>
    <alternativeName>
        <fullName>Protein BRITTLE 1 homolog</fullName>
        <shortName>AtBT1</shortName>
    </alternativeName>
    <alternativeName>
        <fullName>Protein EMBRYO DEFECTIVE 104</fullName>
    </alternativeName>
    <alternativeName>
        <fullName>Protein EMBRYO DEFECTIVE 42</fullName>
    </alternativeName>
    <alternativeName>
        <fullName>Protein SODIUM HYPERSENSITIVE 1</fullName>
    </alternativeName>
</protein>
<organism>
    <name type="scientific">Arabidopsis thaliana</name>
    <name type="common">Mouse-ear cress</name>
    <dbReference type="NCBI Taxonomy" id="3702"/>
    <lineage>
        <taxon>Eukaryota</taxon>
        <taxon>Viridiplantae</taxon>
        <taxon>Streptophyta</taxon>
        <taxon>Embryophyta</taxon>
        <taxon>Tracheophyta</taxon>
        <taxon>Spermatophyta</taxon>
        <taxon>Magnoliopsida</taxon>
        <taxon>eudicotyledons</taxon>
        <taxon>Gunneridae</taxon>
        <taxon>Pentapetalae</taxon>
        <taxon>rosids</taxon>
        <taxon>malvids</taxon>
        <taxon>Brassicales</taxon>
        <taxon>Brassicaceae</taxon>
        <taxon>Camelineae</taxon>
        <taxon>Arabidopsis</taxon>
    </lineage>
</organism>
<feature type="transit peptide" description="Chloroplast and mitochondrion" evidence="1">
    <location>
        <begin position="1"/>
        <end status="unknown"/>
    </location>
</feature>
<feature type="chain" id="PRO_0000420802" description="Adenine nucleotide transporter BT1, chloroplastic/mitochondrial">
    <location>
        <begin status="unknown"/>
        <end position="392"/>
    </location>
</feature>
<feature type="transmembrane region" description="Helical; Name=1" evidence="1">
    <location>
        <begin position="113"/>
        <end position="133"/>
    </location>
</feature>
<feature type="transmembrane region" description="Helical; Name=2" evidence="1">
    <location>
        <begin position="168"/>
        <end position="188"/>
    </location>
</feature>
<feature type="transmembrane region" description="Helical; Name=3" evidence="1">
    <location>
        <begin position="204"/>
        <end position="224"/>
    </location>
</feature>
<feature type="transmembrane region" description="Helical; Name=4" evidence="1">
    <location>
        <begin position="263"/>
        <end position="283"/>
    </location>
</feature>
<feature type="transmembrane region" description="Helical; Name=5" evidence="1">
    <location>
        <begin position="302"/>
        <end position="322"/>
    </location>
</feature>
<feature type="transmembrane region" description="Helical; Name=6" evidence="1">
    <location>
        <begin position="359"/>
        <end position="379"/>
    </location>
</feature>
<feature type="repeat" description="Solcar 1">
    <location>
        <begin position="108"/>
        <end position="191"/>
    </location>
</feature>
<feature type="repeat" description="Solcar 2">
    <location>
        <begin position="202"/>
        <end position="286"/>
    </location>
</feature>
<feature type="repeat" description="Solcar 3">
    <location>
        <begin position="296"/>
        <end position="384"/>
    </location>
</feature>
<evidence type="ECO:0000255" key="1"/>
<evidence type="ECO:0000269" key="2">
    <source>
    </source>
</evidence>
<evidence type="ECO:0000269" key="3">
    <source>
    </source>
</evidence>
<evidence type="ECO:0000269" key="4">
    <source>
    </source>
</evidence>
<evidence type="ECO:0000269" key="5">
    <source>
    </source>
</evidence>
<evidence type="ECO:0000305" key="6"/>
<evidence type="ECO:0000305" key="7">
    <source>
    </source>
</evidence>
<dbReference type="EMBL" id="AL034567">
    <property type="protein sequence ID" value="CAA22567.1"/>
    <property type="molecule type" value="Genomic_DNA"/>
</dbReference>
<dbReference type="EMBL" id="AL161581">
    <property type="protein sequence ID" value="CAB79957.1"/>
    <property type="molecule type" value="Genomic_DNA"/>
</dbReference>
<dbReference type="EMBL" id="CP002687">
    <property type="protein sequence ID" value="AEE86052.1"/>
    <property type="molecule type" value="Genomic_DNA"/>
</dbReference>
<dbReference type="EMBL" id="AF372944">
    <property type="protein sequence ID" value="AAK50084.1"/>
    <property type="molecule type" value="mRNA"/>
</dbReference>
<dbReference type="EMBL" id="AY074831">
    <property type="protein sequence ID" value="AAL69529.1"/>
    <property type="molecule type" value="mRNA"/>
</dbReference>
<dbReference type="EMBL" id="AY084938">
    <property type="protein sequence ID" value="AAM61499.1"/>
    <property type="molecule type" value="mRNA"/>
</dbReference>
<dbReference type="PIR" id="T05350">
    <property type="entry name" value="T05350"/>
</dbReference>
<dbReference type="RefSeq" id="NP_194966.1">
    <property type="nucleotide sequence ID" value="NM_119392.4"/>
</dbReference>
<dbReference type="SMR" id="Q9SUV1"/>
<dbReference type="FunCoup" id="Q9SUV1">
    <property type="interactions" value="325"/>
</dbReference>
<dbReference type="STRING" id="3702.Q9SUV1"/>
<dbReference type="TCDB" id="2.A.29.11.4">
    <property type="family name" value="the mitochondrial carrier (mc) family"/>
</dbReference>
<dbReference type="iPTMnet" id="Q9SUV1"/>
<dbReference type="PaxDb" id="3702-AT4G32400.1"/>
<dbReference type="ProteomicsDB" id="240366"/>
<dbReference type="EnsemblPlants" id="AT4G32400.1">
    <property type="protein sequence ID" value="AT4G32400.1"/>
    <property type="gene ID" value="AT4G32400"/>
</dbReference>
<dbReference type="GeneID" id="829375"/>
<dbReference type="Gramene" id="AT4G32400.1">
    <property type="protein sequence ID" value="AT4G32400.1"/>
    <property type="gene ID" value="AT4G32400"/>
</dbReference>
<dbReference type="KEGG" id="ath:AT4G32400"/>
<dbReference type="Araport" id="AT4G32400"/>
<dbReference type="TAIR" id="AT4G32400">
    <property type="gene designation" value="SHS1"/>
</dbReference>
<dbReference type="eggNOG" id="KOG0752">
    <property type="taxonomic scope" value="Eukaryota"/>
</dbReference>
<dbReference type="HOGENOM" id="CLU_015166_10_8_1"/>
<dbReference type="InParanoid" id="Q9SUV1"/>
<dbReference type="OMA" id="ESPPFQE"/>
<dbReference type="OrthoDB" id="270584at2759"/>
<dbReference type="PhylomeDB" id="Q9SUV1"/>
<dbReference type="SABIO-RK" id="Q9SUV1"/>
<dbReference type="PRO" id="PR:Q9SUV1"/>
<dbReference type="Proteomes" id="UP000006548">
    <property type="component" value="Chromosome 4"/>
</dbReference>
<dbReference type="ExpressionAtlas" id="Q9SUV1">
    <property type="expression patterns" value="baseline and differential"/>
</dbReference>
<dbReference type="GO" id="GO:0009507">
    <property type="term" value="C:chloroplast"/>
    <property type="evidence" value="ECO:0007005"/>
    <property type="project" value="TAIR"/>
</dbReference>
<dbReference type="GO" id="GO:0009941">
    <property type="term" value="C:chloroplast envelope"/>
    <property type="evidence" value="ECO:0007005"/>
    <property type="project" value="TAIR"/>
</dbReference>
<dbReference type="GO" id="GO:0009706">
    <property type="term" value="C:chloroplast inner membrane"/>
    <property type="evidence" value="ECO:0007669"/>
    <property type="project" value="UniProtKB-SubCell"/>
</dbReference>
<dbReference type="GO" id="GO:0005743">
    <property type="term" value="C:mitochondrial inner membrane"/>
    <property type="evidence" value="ECO:0007669"/>
    <property type="project" value="UniProtKB-SubCell"/>
</dbReference>
<dbReference type="GO" id="GO:0005739">
    <property type="term" value="C:mitochondrion"/>
    <property type="evidence" value="ECO:0000314"/>
    <property type="project" value="TAIR"/>
</dbReference>
<dbReference type="GO" id="GO:0005886">
    <property type="term" value="C:plasma membrane"/>
    <property type="evidence" value="ECO:0007005"/>
    <property type="project" value="TAIR"/>
</dbReference>
<dbReference type="GO" id="GO:0009536">
    <property type="term" value="C:plastid"/>
    <property type="evidence" value="ECO:0007005"/>
    <property type="project" value="TAIR"/>
</dbReference>
<dbReference type="GO" id="GO:0055085">
    <property type="term" value="P:transmembrane transport"/>
    <property type="evidence" value="ECO:0007669"/>
    <property type="project" value="InterPro"/>
</dbReference>
<dbReference type="FunFam" id="1.50.40.10:FF:000150">
    <property type="entry name" value="Adenine nucleotide transporter BT1, chloroplastic/mitochondrial"/>
    <property type="match status" value="1"/>
</dbReference>
<dbReference type="Gene3D" id="1.50.40.10">
    <property type="entry name" value="Mitochondrial carrier domain"/>
    <property type="match status" value="1"/>
</dbReference>
<dbReference type="InterPro" id="IPR002067">
    <property type="entry name" value="Mit_carrier"/>
</dbReference>
<dbReference type="InterPro" id="IPR018108">
    <property type="entry name" value="Mitochondrial_sb/sol_carrier"/>
</dbReference>
<dbReference type="InterPro" id="IPR023395">
    <property type="entry name" value="Mt_carrier_dom_sf"/>
</dbReference>
<dbReference type="PANTHER" id="PTHR24089">
    <property type="entry name" value="SOLUTE CARRIER FAMILY 25"/>
    <property type="match status" value="1"/>
</dbReference>
<dbReference type="Pfam" id="PF00153">
    <property type="entry name" value="Mito_carr"/>
    <property type="match status" value="3"/>
</dbReference>
<dbReference type="PRINTS" id="PR00926">
    <property type="entry name" value="MITOCARRIER"/>
</dbReference>
<dbReference type="SUPFAM" id="SSF103506">
    <property type="entry name" value="Mitochondrial carrier"/>
    <property type="match status" value="1"/>
</dbReference>
<dbReference type="PROSITE" id="PS50920">
    <property type="entry name" value="SOLCAR"/>
    <property type="match status" value="3"/>
</dbReference>
<name>BRT1_ARATH</name>
<comment type="function">
    <text evidence="2 3 5">Probable mitochondrial adenylate carrier that catalyzes the transport of ATP, ADP and AMP, but not ADP-glucose. Recombinant BT1 shows a unidirectional mode of transport in intact E.coli cells. May function as a plastidial nucleotide uniport carrier required to export newly synthesized adenylates into the cytosol. May be involved in abiotic stress response.</text>
</comment>
<comment type="activity regulation">
    <text evidence="3">Inhibited by pyridoxal 5-phosphate but not mersalyl.</text>
</comment>
<comment type="biophysicochemical properties">
    <kinetics>
        <KM evidence="3">424 uM for ATP (for the recombinant protein in intact E.coli cells)</KM>
        <KM evidence="3">390 uM for ADP (for the recombinant protein in intact E.coli cells)</KM>
        <KM evidence="3">331 uM for AMP (for the recombinant protein in intact E.coli cells)</KM>
        <Vmax evidence="3">1.02 nmol/h/mg enzyme toward ATP (for the recombinant protein in intact E.coli cells)</Vmax>
        <Vmax evidence="3">2.65 nmol/h/mg enzyme toward ADP (for the recombinant protein in intact E.coli cells)</Vmax>
        <Vmax evidence="3">8.72 mmol/h/mg enzyme toward AMP (for the recombinant protein in intact E.coli cells)</Vmax>
    </kinetics>
</comment>
<comment type="subcellular location">
    <subcellularLocation>
        <location evidence="6">Plastid</location>
        <location evidence="6">Chloroplast inner membrane</location>
        <topology evidence="6">Multi-pass membrane protein</topology>
    </subcellularLocation>
    <subcellularLocation>
        <location evidence="6">Mitochondrion inner membrane</location>
        <topology evidence="6">Multi-pass membrane protein</topology>
    </subcellularLocation>
    <text evidence="4">Dually targeted to mitochondria and plastids. The N-terminal extension acts as a plastidic transit peptide. Dual localization of BT1 does not seem to be due to alternative transcription start sites, translation initiation sites or alternative exon splicing (PubMed:21330298).</text>
</comment>
<comment type="tissue specificity">
    <text evidence="3">Expressed in root tips, the central cylinder of young roots, and maturating and germinating pollen.</text>
</comment>
<comment type="disruption phenotype">
    <text evidence="3">Impaired growth, flower and silique development, and production of shrunk and sterile seeds.</text>
</comment>
<comment type="miscellaneous">
    <text evidence="7">The growth retardation observed in plants silencing BT1 is circumvented by adenosine feeding.</text>
</comment>
<comment type="similarity">
    <text evidence="6">Belongs to the mitochondrial carrier (TC 2.A.29) family.</text>
</comment>
<sequence length="392" mass="42571">MGKTGIQLFDDSRNGFFSVSDLGFDSSLNSSNYHPIGGLFASVNQTNPFASLSSSDLSNRGNNSFSTQLNDLYTKYMPGKEEEEEVVNGEKRKRKKKGGLTLKIKIANPSLRRLLSGAVAGAVSRTVVAPLETIRTHLMVGSGGNSSTEVFSDIMKHEGWTGLFRGNLVNVIRVAPARAVELFVFETVNKKLSPPHGQESKIPIPASLLAGACAGVSQTLLTYPLELVKTRLTIQRGVYKGIFDAFLKIIREEGPTELYRGLAPSLIGVVPYAATNYFAYDSLRKAYRSFSKQEKIGNIETLLIGSLAGALSSTATFPLEVARKHMQVGAVSGRVVYKNMLHALVTILEHEGILGWYKGLGPSCLKLVPAAGISFMCYEACKKILIENNQEA</sequence>
<gene>
    <name type="primary">BT1</name>
    <name type="synonym">EMB104</name>
    <name type="synonym">EMB42</name>
    <name type="synonym">SHS1</name>
    <name type="ordered locus">At4g32400</name>
    <name type="ORF">F8B4.100</name>
</gene>